<reference key="1">
    <citation type="journal article" date="1992" name="J. Virol.">
        <title>The third subunit of protein phosphatase 2A (PP2A), a 55-kilodalton protein which is apparently substituted for by T antigens in complexes with the 36- and 63-kilodalton PP2A subunits, bears little resemblance to T antigens.</title>
        <authorList>
            <person name="Pallas D.C."/>
            <person name="Weller W."/>
            <person name="Jaspers S."/>
            <person name="Miller T.B. Jr."/>
            <person name="Lane W.S."/>
            <person name="Roberts T.M."/>
        </authorList>
    </citation>
    <scope>NUCLEOTIDE SEQUENCE [MRNA]</scope>
</reference>
<reference key="2">
    <citation type="journal article" date="2004" name="Genome Res.">
        <title>The status, quality, and expansion of the NIH full-length cDNA project: the Mammalian Gene Collection (MGC).</title>
        <authorList>
            <consortium name="The MGC Project Team"/>
        </authorList>
    </citation>
    <scope>NUCLEOTIDE SEQUENCE [LARGE SCALE MRNA]</scope>
    <source>
        <tissue>Liver</tissue>
    </source>
</reference>
<reference key="3">
    <citation type="journal article" date="1993" name="FEBS Lett.">
        <title>Expression of PP2A B regulatory subunit beta isotype in rat testis.</title>
        <authorList>
            <person name="Hatano Y."/>
            <person name="Shima H."/>
            <person name="Haneji T."/>
            <person name="Miura A.B."/>
            <person name="Sugimura T."/>
            <person name="Nagao M."/>
        </authorList>
    </citation>
    <scope>NUCLEOTIDE SEQUENCE [MRNA] OF 80-272</scope>
    <source>
        <strain>Fischer 344</strain>
    </source>
</reference>
<name>2ABA_RAT</name>
<keyword id="KW-0007">Acetylation</keyword>
<keyword id="KW-1185">Reference proteome</keyword>
<keyword id="KW-0677">Repeat</keyword>
<keyword id="KW-0853">WD repeat</keyword>
<evidence type="ECO:0000250" key="1">
    <source>
        <dbReference type="UniProtKB" id="P63151"/>
    </source>
</evidence>
<evidence type="ECO:0000250" key="2">
    <source>
        <dbReference type="UniProtKB" id="Q6P1F6"/>
    </source>
</evidence>
<evidence type="ECO:0000305" key="3"/>
<protein>
    <recommendedName>
        <fullName>Serine/threonine-protein phosphatase 2A 55 kDa regulatory subunit B alpha isoform</fullName>
    </recommendedName>
    <alternativeName>
        <fullName>PP2A subunit B isoform B55-alpha</fullName>
        <shortName evidence="1">B55</shortName>
    </alternativeName>
    <alternativeName>
        <fullName>PP2A subunit B isoform BRA</fullName>
    </alternativeName>
    <alternativeName>
        <fullName>PP2A subunit B isoform PR55-alpha</fullName>
    </alternativeName>
    <alternativeName>
        <fullName>PP2A subunit B isoform R2-alpha</fullName>
    </alternativeName>
    <alternativeName>
        <fullName>PP2A subunit B isoform alpha</fullName>
    </alternativeName>
</protein>
<dbReference type="EMBL" id="M83298">
    <property type="protein sequence ID" value="AAA41910.1"/>
    <property type="molecule type" value="mRNA"/>
</dbReference>
<dbReference type="EMBL" id="M83297">
    <property type="protein sequence ID" value="AAA41909.1"/>
    <property type="molecule type" value="mRNA"/>
</dbReference>
<dbReference type="EMBL" id="BC128731">
    <property type="protein sequence ID" value="AAI28732.1"/>
    <property type="molecule type" value="mRNA"/>
</dbReference>
<dbReference type="EMBL" id="D14419">
    <property type="protein sequence ID" value="BAA21904.1"/>
    <property type="molecule type" value="mRNA"/>
</dbReference>
<dbReference type="PIR" id="A41805">
    <property type="entry name" value="A41805"/>
</dbReference>
<dbReference type="RefSeq" id="NP_446451.1">
    <property type="nucleotide sequence ID" value="NM_053999.2"/>
</dbReference>
<dbReference type="SMR" id="P36876"/>
<dbReference type="BioGRID" id="250676">
    <property type="interactions" value="3"/>
</dbReference>
<dbReference type="DIP" id="DIP-40819N"/>
<dbReference type="FunCoup" id="P36876">
    <property type="interactions" value="4991"/>
</dbReference>
<dbReference type="IntAct" id="P36876">
    <property type="interactions" value="5"/>
</dbReference>
<dbReference type="MINT" id="P36876"/>
<dbReference type="STRING" id="10116.ENSRNOP00000015318"/>
<dbReference type="iPTMnet" id="P36876"/>
<dbReference type="PhosphoSitePlus" id="P36876"/>
<dbReference type="jPOST" id="P36876"/>
<dbReference type="PaxDb" id="10116-ENSRNOP00000015318"/>
<dbReference type="Ensembl" id="ENSRNOT00000015318.7">
    <property type="protein sequence ID" value="ENSRNOP00000015318.5"/>
    <property type="gene ID" value="ENSRNOG00000011158.7"/>
</dbReference>
<dbReference type="GeneID" id="117104"/>
<dbReference type="KEGG" id="rno:117104"/>
<dbReference type="UCSC" id="RGD:620919">
    <property type="organism name" value="rat"/>
</dbReference>
<dbReference type="AGR" id="RGD:620919"/>
<dbReference type="CTD" id="5520"/>
<dbReference type="RGD" id="620919">
    <property type="gene designation" value="Ppp2r2a"/>
</dbReference>
<dbReference type="eggNOG" id="KOG1354">
    <property type="taxonomic scope" value="Eukaryota"/>
</dbReference>
<dbReference type="GeneTree" id="ENSGT00950000182864"/>
<dbReference type="HOGENOM" id="CLU_021713_3_3_1"/>
<dbReference type="InParanoid" id="P36876"/>
<dbReference type="OrthoDB" id="15779at9989"/>
<dbReference type="PhylomeDB" id="P36876"/>
<dbReference type="TreeFam" id="TF105553"/>
<dbReference type="Reactome" id="R-RNO-2995383">
    <property type="pathway name" value="Initiation of Nuclear Envelope (NE) Reformation"/>
</dbReference>
<dbReference type="Reactome" id="R-RNO-69231">
    <property type="pathway name" value="Cyclin D associated events in G1"/>
</dbReference>
<dbReference type="Reactome" id="R-RNO-69273">
    <property type="pathway name" value="Cyclin A/B1/B2 associated events during G2/M transition"/>
</dbReference>
<dbReference type="Reactome" id="R-RNO-975957">
    <property type="pathway name" value="Nonsense Mediated Decay (NMD) enhanced by the Exon Junction Complex (EJC)"/>
</dbReference>
<dbReference type="Reactome" id="R-RNO-9860927">
    <property type="pathway name" value="Turbulent (oscillatory, disturbed) flow shear stress activates signaling by PIEZO1 and integrins in endothelial cells"/>
</dbReference>
<dbReference type="PRO" id="PR:P36876"/>
<dbReference type="Proteomes" id="UP000002494">
    <property type="component" value="Chromosome 15"/>
</dbReference>
<dbReference type="Bgee" id="ENSRNOG00000011158">
    <property type="expression patterns" value="Expressed in ovary and 20 other cell types or tissues"/>
</dbReference>
<dbReference type="GO" id="GO:0005829">
    <property type="term" value="C:cytosol"/>
    <property type="evidence" value="ECO:0000318"/>
    <property type="project" value="GO_Central"/>
</dbReference>
<dbReference type="GO" id="GO:0098978">
    <property type="term" value="C:glutamatergic synapse"/>
    <property type="evidence" value="ECO:0000266"/>
    <property type="project" value="RGD"/>
</dbReference>
<dbReference type="GO" id="GO:0000159">
    <property type="term" value="C:protein phosphatase type 2A complex"/>
    <property type="evidence" value="ECO:0000250"/>
    <property type="project" value="UniProtKB"/>
</dbReference>
<dbReference type="GO" id="GO:0045202">
    <property type="term" value="C:synapse"/>
    <property type="evidence" value="ECO:0000266"/>
    <property type="project" value="RGD"/>
</dbReference>
<dbReference type="GO" id="GO:0140767">
    <property type="term" value="F:enzyme-substrate adaptor activity"/>
    <property type="evidence" value="ECO:0000250"/>
    <property type="project" value="UniProtKB"/>
</dbReference>
<dbReference type="GO" id="GO:0051721">
    <property type="term" value="F:protein phosphatase 2A binding"/>
    <property type="evidence" value="ECO:0000353"/>
    <property type="project" value="RGD"/>
</dbReference>
<dbReference type="GO" id="GO:0019888">
    <property type="term" value="F:protein phosphatase regulator activity"/>
    <property type="evidence" value="ECO:0000250"/>
    <property type="project" value="UniProtKB"/>
</dbReference>
<dbReference type="GO" id="GO:0044877">
    <property type="term" value="F:protein-containing complex binding"/>
    <property type="evidence" value="ECO:0000353"/>
    <property type="project" value="RGD"/>
</dbReference>
<dbReference type="GO" id="GO:0048156">
    <property type="term" value="F:tau protein binding"/>
    <property type="evidence" value="ECO:0000353"/>
    <property type="project" value="RGD"/>
</dbReference>
<dbReference type="GO" id="GO:0006470">
    <property type="term" value="P:protein dephosphorylation"/>
    <property type="evidence" value="ECO:0000250"/>
    <property type="project" value="UniProtKB"/>
</dbReference>
<dbReference type="GO" id="GO:0051983">
    <property type="term" value="P:regulation of chromosome segregation"/>
    <property type="evidence" value="ECO:0000250"/>
    <property type="project" value="UniProtKB"/>
</dbReference>
<dbReference type="GO" id="GO:0043278">
    <property type="term" value="P:response to morphine"/>
    <property type="evidence" value="ECO:0000266"/>
    <property type="project" value="RGD"/>
</dbReference>
<dbReference type="FunFam" id="2.130.10.10:FF:000002">
    <property type="entry name" value="Serine/threonine-protein phosphatase 2A 55 kDa regulatory subunit B"/>
    <property type="match status" value="1"/>
</dbReference>
<dbReference type="Gene3D" id="2.130.10.10">
    <property type="entry name" value="YVTN repeat-like/Quinoprotein amine dehydrogenase"/>
    <property type="match status" value="1"/>
</dbReference>
<dbReference type="InterPro" id="IPR000009">
    <property type="entry name" value="PP2A_PR55"/>
</dbReference>
<dbReference type="InterPro" id="IPR018067">
    <property type="entry name" value="PP2A_PR55_CS"/>
</dbReference>
<dbReference type="InterPro" id="IPR015943">
    <property type="entry name" value="WD40/YVTN_repeat-like_dom_sf"/>
</dbReference>
<dbReference type="InterPro" id="IPR036322">
    <property type="entry name" value="WD40_repeat_dom_sf"/>
</dbReference>
<dbReference type="InterPro" id="IPR001680">
    <property type="entry name" value="WD40_rpt"/>
</dbReference>
<dbReference type="PANTHER" id="PTHR11871">
    <property type="entry name" value="PROTEIN PHOSPHATASE PP2A REGULATORY SUBUNIT B"/>
    <property type="match status" value="1"/>
</dbReference>
<dbReference type="PIRSF" id="PIRSF037309">
    <property type="entry name" value="PP2A_PR55"/>
    <property type="match status" value="1"/>
</dbReference>
<dbReference type="PRINTS" id="PR00600">
    <property type="entry name" value="PP2APR55"/>
</dbReference>
<dbReference type="SMART" id="SM00320">
    <property type="entry name" value="WD40"/>
    <property type="match status" value="7"/>
</dbReference>
<dbReference type="SUPFAM" id="SSF50978">
    <property type="entry name" value="WD40 repeat-like"/>
    <property type="match status" value="1"/>
</dbReference>
<dbReference type="PROSITE" id="PS01024">
    <property type="entry name" value="PR55_1"/>
    <property type="match status" value="1"/>
</dbReference>
<dbReference type="PROSITE" id="PS01025">
    <property type="entry name" value="PR55_2"/>
    <property type="match status" value="1"/>
</dbReference>
<sequence length="447" mass="51678">MAGAGGGNDIQWCFSQVKGAVDDDVAEADIISTVEFNHSGELLATGDKGGRVVIFQQEQENKIQSHSRGEYNVYSTFQSHEPEFDYLKSLEIEEKINKIRWLPQKNAAQFLLSTNDKTIKLWKISERDKRPEGYNLKEEDGRYRDPTTVTTLRVPVFRPMDLMVEASPRRIFANAHTYHINSISINSDYETYLSADDLRINLWHLEITDRSFNIVDIKPANMEELTEVITAAEFHPNSCNTFVYSSSKGTIRLCDMRASALCDRHSKLFEEPEDPSNRSFFSEIISSISDVKFSHSGRYMMTRDYLSVKVWDLNMENRPVETYQVHEYLRSKLCSLYENDCIFDKFECCWNGSDSVVMTGSYNNFFRMFDRNTKRDITLEASRENNKPRTVLKPRKVCASGKRKKDEISVDSLDFNKKILHTAWHPKENIIAVATTNNLYIFQDKVN</sequence>
<organism>
    <name type="scientific">Rattus norvegicus</name>
    <name type="common">Rat</name>
    <dbReference type="NCBI Taxonomy" id="10116"/>
    <lineage>
        <taxon>Eukaryota</taxon>
        <taxon>Metazoa</taxon>
        <taxon>Chordata</taxon>
        <taxon>Craniata</taxon>
        <taxon>Vertebrata</taxon>
        <taxon>Euteleostomi</taxon>
        <taxon>Mammalia</taxon>
        <taxon>Eutheria</taxon>
        <taxon>Euarchontoglires</taxon>
        <taxon>Glires</taxon>
        <taxon>Rodentia</taxon>
        <taxon>Myomorpha</taxon>
        <taxon>Muroidea</taxon>
        <taxon>Muridae</taxon>
        <taxon>Murinae</taxon>
        <taxon>Rattus</taxon>
    </lineage>
</organism>
<comment type="function">
    <text evidence="1 2">Substrate-recognition subunit of protein phosphatase 2A (PP2A) that plays a key role in cell cycle by controlling mitosis entry and exit. Involved in chromosome clustering during late mitosis by mediating dephosphorylation of MKI67 (By similarity). Essential for serine/threonine-protein phosphatase 2A-mediated dephosphorylation of WEE1, preventing its ubiquitin-mediated proteolysis, increasing WEE1 protein levels, and promoting the G2/M checkpoint (By similarity).</text>
</comment>
<comment type="subunit">
    <text evidence="1 2">PP2A consists of a common heterodimeric core enzyme, composed of a 36 kDa catalytic subunit (subunit C) and a 65 kDa constant regulatory subunit (PR65 or subunit A), that associates with a variety of regulatory subunits (By similarity). Proteins that associate with the core dimer include three families of regulatory subunits B (the R2/B/PR55/B55, R3/B''/PR72/PR130/PR59 and R5/B'/B56 families), the 48 kDa variable regulatory subunit, viral proteins, and cell signaling molecules (By similarity). Interacts with the PP2A C catalytic subunit PPP2CA (By similarity). Interacts with the PP2A A subunit PPP2R1A (By similarity). Found in a complex with at least ARL2, PPP2CB, PPP2R1A, PPP2R2A, PPP2R5E and TBCD (By similarity). Interacts with MFHAS1; the interaction is direct (By similarity). Interacts with PABIR1/FAM122A (via its N-terminus); the interaction is direct and inhibits PP2A activity (By similarity). Interacts with ARPP19; the interaction is direct and inhibits PP2A activity (By similarity). Interacts with CRTC3 (By similarity).</text>
</comment>
<comment type="tissue specificity">
    <text>Brain.</text>
</comment>
<comment type="domain">
    <text evidence="1">Has an extended WD 2 repeat that is important for the interaction with PPP2R1A.</text>
</comment>
<comment type="similarity">
    <text evidence="3">Belongs to the phosphatase 2A regulatory subunit B family.</text>
</comment>
<proteinExistence type="evidence at transcript level"/>
<accession>P36876</accession>
<accession>A1A5M9</accession>
<accession>O35512</accession>
<accession>P36878</accession>
<gene>
    <name type="primary">Ppp2r2a</name>
</gene>
<feature type="initiator methionine" description="Removed" evidence="1">
    <location>
        <position position="1"/>
    </location>
</feature>
<feature type="chain" id="PRO_0000071420" description="Serine/threonine-protein phosphatase 2A 55 kDa regulatory subunit B alpha isoform">
    <location>
        <begin position="2"/>
        <end position="447"/>
    </location>
</feature>
<feature type="repeat" description="WD 1" evidence="1">
    <location>
        <begin position="11"/>
        <end position="80"/>
    </location>
</feature>
<feature type="repeat" description="WD 2" evidence="1">
    <location>
        <begin position="94"/>
        <end position="174"/>
    </location>
</feature>
<feature type="repeat" description="WD 3" evidence="1">
    <location>
        <begin position="175"/>
        <end position="218"/>
    </location>
</feature>
<feature type="repeat" description="WD 4" evidence="1">
    <location>
        <begin position="227"/>
        <end position="270"/>
    </location>
</feature>
<feature type="repeat" description="WD 5" evidence="1">
    <location>
        <begin position="288"/>
        <end position="325"/>
    </location>
</feature>
<feature type="repeat" description="WD 6" evidence="1">
    <location>
        <begin position="347"/>
        <end position="381"/>
    </location>
</feature>
<feature type="repeat" description="WD 7" evidence="1">
    <location>
        <begin position="414"/>
        <end position="446"/>
    </location>
</feature>
<feature type="modified residue" description="N-acetylalanine" evidence="1">
    <location>
        <position position="2"/>
    </location>
</feature>
<feature type="sequence variant">
    <original>E</original>
    <variation>ESFKVHAALREASNLSMQ</variation>
    <location>
        <position position="60"/>
    </location>
</feature>
<feature type="sequence conflict" description="In Ref. 1; AAA41909." evidence="3" ref="1">
    <original>K</original>
    <variation>E</variation>
    <location>
        <position position="105"/>
    </location>
</feature>
<feature type="sequence conflict" description="In Ref. 3; BAA21904." evidence="3" ref="3">
    <original>K</original>
    <variation>R</variation>
    <location>
        <position position="105"/>
    </location>
</feature>
<feature type="sequence conflict" description="In Ref. 3; BAA21904." evidence="3" ref="3">
    <original>N</original>
    <variation>S</variation>
    <location>
        <position position="213"/>
    </location>
</feature>
<feature type="sequence conflict" description="In Ref. 3; BAA21904." evidence="3" ref="3">
    <original>M</original>
    <variation>V</variation>
    <location>
        <position position="222"/>
    </location>
</feature>